<reference key="1">
    <citation type="submission" date="2007-10" db="EMBL/GenBank/DDBJ databases">
        <title>Complete sequence of Caldivirga maquilingensis IC-167.</title>
        <authorList>
            <consortium name="US DOE Joint Genome Institute"/>
            <person name="Copeland A."/>
            <person name="Lucas S."/>
            <person name="Lapidus A."/>
            <person name="Barry K."/>
            <person name="Glavina del Rio T."/>
            <person name="Dalin E."/>
            <person name="Tice H."/>
            <person name="Pitluck S."/>
            <person name="Saunders E."/>
            <person name="Brettin T."/>
            <person name="Bruce D."/>
            <person name="Detter J.C."/>
            <person name="Han C."/>
            <person name="Schmutz J."/>
            <person name="Larimer F."/>
            <person name="Land M."/>
            <person name="Hauser L."/>
            <person name="Kyrpides N."/>
            <person name="Ivanova N."/>
            <person name="Biddle J.F."/>
            <person name="Zhang Z."/>
            <person name="Fitz-Gibbon S.T."/>
            <person name="Lowe T.M."/>
            <person name="Saltikov C."/>
            <person name="House C.H."/>
            <person name="Richardson P."/>
        </authorList>
    </citation>
    <scope>NUCLEOTIDE SEQUENCE [LARGE SCALE GENOMIC DNA]</scope>
    <source>
        <strain>ATCC 700844 / DSM 13496 / JCM 10307 / IC-167</strain>
    </source>
</reference>
<dbReference type="EMBL" id="CP000852">
    <property type="protein sequence ID" value="ABW02156.1"/>
    <property type="molecule type" value="Genomic_DNA"/>
</dbReference>
<dbReference type="RefSeq" id="WP_012186375.1">
    <property type="nucleotide sequence ID" value="NC_009954.1"/>
</dbReference>
<dbReference type="SMR" id="A8M8T7"/>
<dbReference type="STRING" id="397948.Cmaq_1330"/>
<dbReference type="GeneID" id="5710124"/>
<dbReference type="KEGG" id="cma:Cmaq_1330"/>
<dbReference type="eggNOG" id="arCOG04095">
    <property type="taxonomic scope" value="Archaea"/>
</dbReference>
<dbReference type="HOGENOM" id="CLU_095071_3_0_2"/>
<dbReference type="OrthoDB" id="23569at2157"/>
<dbReference type="Proteomes" id="UP000001137">
    <property type="component" value="Chromosome"/>
</dbReference>
<dbReference type="GO" id="GO:0022625">
    <property type="term" value="C:cytosolic large ribosomal subunit"/>
    <property type="evidence" value="ECO:0007669"/>
    <property type="project" value="TreeGrafter"/>
</dbReference>
<dbReference type="GO" id="GO:0070180">
    <property type="term" value="F:large ribosomal subunit rRNA binding"/>
    <property type="evidence" value="ECO:0007669"/>
    <property type="project" value="TreeGrafter"/>
</dbReference>
<dbReference type="GO" id="GO:0003735">
    <property type="term" value="F:structural constituent of ribosome"/>
    <property type="evidence" value="ECO:0007669"/>
    <property type="project" value="InterPro"/>
</dbReference>
<dbReference type="GO" id="GO:0006412">
    <property type="term" value="P:translation"/>
    <property type="evidence" value="ECO:0007669"/>
    <property type="project" value="UniProtKB-UniRule"/>
</dbReference>
<dbReference type="CDD" id="cd00337">
    <property type="entry name" value="Ribosomal_uL14"/>
    <property type="match status" value="1"/>
</dbReference>
<dbReference type="FunFam" id="2.40.150.20:FF:000007">
    <property type="entry name" value="50S ribosomal protein L14"/>
    <property type="match status" value="1"/>
</dbReference>
<dbReference type="Gene3D" id="2.40.150.20">
    <property type="entry name" value="Ribosomal protein L14"/>
    <property type="match status" value="1"/>
</dbReference>
<dbReference type="HAMAP" id="MF_01367">
    <property type="entry name" value="Ribosomal_uL14"/>
    <property type="match status" value="1"/>
</dbReference>
<dbReference type="InterPro" id="IPR000218">
    <property type="entry name" value="Ribosomal_uL14"/>
</dbReference>
<dbReference type="InterPro" id="IPR019971">
    <property type="entry name" value="Ribosomal_uL14_arc"/>
</dbReference>
<dbReference type="InterPro" id="IPR019972">
    <property type="entry name" value="Ribosomal_uL14_CS"/>
</dbReference>
<dbReference type="InterPro" id="IPR036853">
    <property type="entry name" value="Ribosomal_uL14_sf"/>
</dbReference>
<dbReference type="NCBIfam" id="NF006344">
    <property type="entry name" value="PRK08571.1"/>
    <property type="match status" value="1"/>
</dbReference>
<dbReference type="NCBIfam" id="TIGR03673">
    <property type="entry name" value="uL14_arch"/>
    <property type="match status" value="1"/>
</dbReference>
<dbReference type="PANTHER" id="PTHR11761">
    <property type="entry name" value="50S/60S RIBOSOMAL PROTEIN L14/L23"/>
    <property type="match status" value="1"/>
</dbReference>
<dbReference type="PANTHER" id="PTHR11761:SF8">
    <property type="entry name" value="LARGE RIBOSOMAL SUBUNIT PROTEIN UL14"/>
    <property type="match status" value="1"/>
</dbReference>
<dbReference type="Pfam" id="PF00238">
    <property type="entry name" value="Ribosomal_L14"/>
    <property type="match status" value="1"/>
</dbReference>
<dbReference type="SMART" id="SM01374">
    <property type="entry name" value="Ribosomal_L14"/>
    <property type="match status" value="1"/>
</dbReference>
<dbReference type="SUPFAM" id="SSF50193">
    <property type="entry name" value="Ribosomal protein L14"/>
    <property type="match status" value="1"/>
</dbReference>
<dbReference type="PROSITE" id="PS00049">
    <property type="entry name" value="RIBOSOMAL_L14"/>
    <property type="match status" value="1"/>
</dbReference>
<comment type="function">
    <text evidence="1">Binds to 23S rRNA. Forms part of two intersubunit bridges in the 70S ribosome.</text>
</comment>
<comment type="subunit">
    <text evidence="1">Part of the 50S ribosomal subunit. Forms a cluster with proteins L3 and L24e, part of which may contact the 16S rRNA in 2 intersubunit bridges.</text>
</comment>
<comment type="similarity">
    <text evidence="1">Belongs to the universal ribosomal protein uL14 family.</text>
</comment>
<name>RL14_CALMQ</name>
<sequence length="144" mass="15814">MAKRGGPRTVGVPWRFHLTPGIFMNSLVNVADNSGAKVVKVIGVVGHYSKNVHRRIPGVSVGDMVVVSVQEGKPEMRKQILRAIVVRQRRPFRRPDGTWVAFEDNAVVIVTEEGQVKGTEVHGPVAMEAAQRWPQVASIATMII</sequence>
<evidence type="ECO:0000255" key="1">
    <source>
        <dbReference type="HAMAP-Rule" id="MF_01367"/>
    </source>
</evidence>
<evidence type="ECO:0000305" key="2"/>
<keyword id="KW-1185">Reference proteome</keyword>
<keyword id="KW-0687">Ribonucleoprotein</keyword>
<keyword id="KW-0689">Ribosomal protein</keyword>
<keyword id="KW-0694">RNA-binding</keyword>
<keyword id="KW-0699">rRNA-binding</keyword>
<organism>
    <name type="scientific">Caldivirga maquilingensis (strain ATCC 700844 / DSM 13496 / JCM 10307 / IC-167)</name>
    <dbReference type="NCBI Taxonomy" id="397948"/>
    <lineage>
        <taxon>Archaea</taxon>
        <taxon>Thermoproteota</taxon>
        <taxon>Thermoprotei</taxon>
        <taxon>Thermoproteales</taxon>
        <taxon>Thermoproteaceae</taxon>
        <taxon>Caldivirga</taxon>
    </lineage>
</organism>
<proteinExistence type="inferred from homology"/>
<gene>
    <name evidence="1" type="primary">rpl14</name>
    <name type="ordered locus">Cmaq_1330</name>
</gene>
<feature type="chain" id="PRO_0000355846" description="Large ribosomal subunit protein uL14">
    <location>
        <begin position="1"/>
        <end position="144"/>
    </location>
</feature>
<protein>
    <recommendedName>
        <fullName evidence="1">Large ribosomal subunit protein uL14</fullName>
    </recommendedName>
    <alternativeName>
        <fullName evidence="2">50S ribosomal protein L14</fullName>
    </alternativeName>
</protein>
<accession>A8M8T7</accession>